<proteinExistence type="inferred from homology"/>
<feature type="chain" id="PRO_0000092910" description="Phosphate import ATP-binding protein PstB 2">
    <location>
        <begin position="1"/>
        <end position="267"/>
    </location>
</feature>
<feature type="domain" description="ABC transporter" evidence="1">
    <location>
        <begin position="21"/>
        <end position="262"/>
    </location>
</feature>
<feature type="binding site" evidence="1">
    <location>
        <begin position="53"/>
        <end position="60"/>
    </location>
    <ligand>
        <name>ATP</name>
        <dbReference type="ChEBI" id="CHEBI:30616"/>
    </ligand>
</feature>
<dbReference type="EC" id="7.3.2.1" evidence="1"/>
<dbReference type="EMBL" id="AE009949">
    <property type="protein sequence ID" value="AAL97806.1"/>
    <property type="molecule type" value="Genomic_DNA"/>
</dbReference>
<dbReference type="SMR" id="Q8P0V3"/>
<dbReference type="KEGG" id="spm:spyM18_1191"/>
<dbReference type="HOGENOM" id="CLU_000604_1_22_9"/>
<dbReference type="GO" id="GO:0005886">
    <property type="term" value="C:plasma membrane"/>
    <property type="evidence" value="ECO:0007669"/>
    <property type="project" value="UniProtKB-SubCell"/>
</dbReference>
<dbReference type="GO" id="GO:0005524">
    <property type="term" value="F:ATP binding"/>
    <property type="evidence" value="ECO:0007669"/>
    <property type="project" value="UniProtKB-KW"/>
</dbReference>
<dbReference type="GO" id="GO:0016887">
    <property type="term" value="F:ATP hydrolysis activity"/>
    <property type="evidence" value="ECO:0007669"/>
    <property type="project" value="InterPro"/>
</dbReference>
<dbReference type="GO" id="GO:0015415">
    <property type="term" value="F:ATPase-coupled phosphate ion transmembrane transporter activity"/>
    <property type="evidence" value="ECO:0007669"/>
    <property type="project" value="UniProtKB-EC"/>
</dbReference>
<dbReference type="GO" id="GO:0035435">
    <property type="term" value="P:phosphate ion transmembrane transport"/>
    <property type="evidence" value="ECO:0007669"/>
    <property type="project" value="InterPro"/>
</dbReference>
<dbReference type="CDD" id="cd03260">
    <property type="entry name" value="ABC_PstB_phosphate_transporter"/>
    <property type="match status" value="1"/>
</dbReference>
<dbReference type="Gene3D" id="3.40.50.300">
    <property type="entry name" value="P-loop containing nucleotide triphosphate hydrolases"/>
    <property type="match status" value="1"/>
</dbReference>
<dbReference type="InterPro" id="IPR003593">
    <property type="entry name" value="AAA+_ATPase"/>
</dbReference>
<dbReference type="InterPro" id="IPR003439">
    <property type="entry name" value="ABC_transporter-like_ATP-bd"/>
</dbReference>
<dbReference type="InterPro" id="IPR017871">
    <property type="entry name" value="ABC_transporter-like_CS"/>
</dbReference>
<dbReference type="InterPro" id="IPR027417">
    <property type="entry name" value="P-loop_NTPase"/>
</dbReference>
<dbReference type="InterPro" id="IPR005670">
    <property type="entry name" value="PstB-like"/>
</dbReference>
<dbReference type="NCBIfam" id="TIGR00972">
    <property type="entry name" value="3a0107s01c2"/>
    <property type="match status" value="1"/>
</dbReference>
<dbReference type="PANTHER" id="PTHR43423">
    <property type="entry name" value="ABC TRANSPORTER I FAMILY MEMBER 17"/>
    <property type="match status" value="1"/>
</dbReference>
<dbReference type="PANTHER" id="PTHR43423:SF10">
    <property type="entry name" value="PHOSPHATE IMPORT ATP-BINDING PROTEIN PSTB 2"/>
    <property type="match status" value="1"/>
</dbReference>
<dbReference type="Pfam" id="PF00005">
    <property type="entry name" value="ABC_tran"/>
    <property type="match status" value="1"/>
</dbReference>
<dbReference type="SMART" id="SM00382">
    <property type="entry name" value="AAA"/>
    <property type="match status" value="1"/>
</dbReference>
<dbReference type="SUPFAM" id="SSF52540">
    <property type="entry name" value="P-loop containing nucleoside triphosphate hydrolases"/>
    <property type="match status" value="1"/>
</dbReference>
<dbReference type="PROSITE" id="PS00211">
    <property type="entry name" value="ABC_TRANSPORTER_1"/>
    <property type="match status" value="1"/>
</dbReference>
<dbReference type="PROSITE" id="PS50893">
    <property type="entry name" value="ABC_TRANSPORTER_2"/>
    <property type="match status" value="1"/>
</dbReference>
<dbReference type="PROSITE" id="PS51238">
    <property type="entry name" value="PSTB"/>
    <property type="match status" value="1"/>
</dbReference>
<gene>
    <name evidence="1" type="primary">pstB2</name>
    <name type="ordered locus">spyM18_1191</name>
</gene>
<evidence type="ECO:0000255" key="1">
    <source>
        <dbReference type="HAMAP-Rule" id="MF_01702"/>
    </source>
</evidence>
<organism>
    <name type="scientific">Streptococcus pyogenes serotype M18 (strain MGAS8232)</name>
    <dbReference type="NCBI Taxonomy" id="186103"/>
    <lineage>
        <taxon>Bacteria</taxon>
        <taxon>Bacillati</taxon>
        <taxon>Bacillota</taxon>
        <taxon>Bacilli</taxon>
        <taxon>Lactobacillales</taxon>
        <taxon>Streptococcaceae</taxon>
        <taxon>Streptococcus</taxon>
    </lineage>
</organism>
<protein>
    <recommendedName>
        <fullName evidence="1">Phosphate import ATP-binding protein PstB 2</fullName>
        <ecNumber evidence="1">7.3.2.1</ecNumber>
    </recommendedName>
    <alternativeName>
        <fullName evidence="1">ABC phosphate transporter 2</fullName>
    </alternativeName>
    <alternativeName>
        <fullName evidence="1">Phosphate-transporting ATPase 2</fullName>
    </alternativeName>
</protein>
<sequence>MTEYNWNERHIITFPEETLALATKDLHVYYGAKEAIKGIDMQFEKYKITALIGPSGCGKSTYLRSLNRMNDTIDIARVTGEILYQGIDVNRKDMNVYEIRKHLGMVFQRPNPFAKSIYKNITFAHERAGVKDKKVLDEIVETSLKQAALWDQVKDDLHKSAFTLSGGQQQRLCIARAISVKPDILLMDEPASALDPIATMQLEETMFELKKNYTIIIVTHNMQQAARASDYTAFFYLGNLIEYDKTRNIFQNAQCQSTNDYVSGHFG</sequence>
<reference key="1">
    <citation type="journal article" date="2002" name="Proc. Natl. Acad. Sci. U.S.A.">
        <title>Genome sequence and comparative microarray analysis of serotype M18 group A Streptococcus strains associated with acute rheumatic fever outbreaks.</title>
        <authorList>
            <person name="Smoot J.C."/>
            <person name="Barbian K.D."/>
            <person name="Van Gompel J.J."/>
            <person name="Smoot L.M."/>
            <person name="Chaussee M.S."/>
            <person name="Sylva G.L."/>
            <person name="Sturdevant D.E."/>
            <person name="Ricklefs S.M."/>
            <person name="Porcella S.F."/>
            <person name="Parkins L.D."/>
            <person name="Beres S.B."/>
            <person name="Campbell D.S."/>
            <person name="Smith T.M."/>
            <person name="Zhang Q."/>
            <person name="Kapur V."/>
            <person name="Daly J.A."/>
            <person name="Veasy L.G."/>
            <person name="Musser J.M."/>
        </authorList>
    </citation>
    <scope>NUCLEOTIDE SEQUENCE [LARGE SCALE GENOMIC DNA]</scope>
    <source>
        <strain>MGAS8232</strain>
    </source>
</reference>
<accession>Q8P0V3</accession>
<keyword id="KW-0067">ATP-binding</keyword>
<keyword id="KW-1003">Cell membrane</keyword>
<keyword id="KW-0472">Membrane</keyword>
<keyword id="KW-0547">Nucleotide-binding</keyword>
<keyword id="KW-0592">Phosphate transport</keyword>
<keyword id="KW-1278">Translocase</keyword>
<keyword id="KW-0813">Transport</keyword>
<comment type="function">
    <text evidence="1">Part of the ABC transporter complex PstSACB involved in phosphate import. Responsible for energy coupling to the transport system.</text>
</comment>
<comment type="catalytic activity">
    <reaction evidence="1">
        <text>phosphate(out) + ATP + H2O = ADP + 2 phosphate(in) + H(+)</text>
        <dbReference type="Rhea" id="RHEA:24440"/>
        <dbReference type="ChEBI" id="CHEBI:15377"/>
        <dbReference type="ChEBI" id="CHEBI:15378"/>
        <dbReference type="ChEBI" id="CHEBI:30616"/>
        <dbReference type="ChEBI" id="CHEBI:43474"/>
        <dbReference type="ChEBI" id="CHEBI:456216"/>
        <dbReference type="EC" id="7.3.2.1"/>
    </reaction>
</comment>
<comment type="subunit">
    <text evidence="1">The complex is composed of two ATP-binding proteins (PstB), two transmembrane proteins (PstC and PstA) and a solute-binding protein (PstS).</text>
</comment>
<comment type="subcellular location">
    <subcellularLocation>
        <location evidence="1">Cell membrane</location>
        <topology evidence="1">Peripheral membrane protein</topology>
    </subcellularLocation>
</comment>
<comment type="similarity">
    <text evidence="1">Belongs to the ABC transporter superfamily. Phosphate importer (TC 3.A.1.7) family.</text>
</comment>
<name>PSTB2_STRP8</name>